<name>DNAK_CLOBJ</name>
<sequence>MAKIIGIDLGTTNSCVSVMEGGEPVVIPNAEGSRTTPSVVSFQANGERLIGQVAKRQAITNPEKTIISIKRYMGTDHKVNIDSTEYTPQQISAMVLQKLKADAEAYLGEKVTQAVITVPAYFNDSQRQATKDAGKIAGLEVLRIINEPTAASLAYGLDKMDTNEKILVYDLGGGTFDVSILELGDGVFEVKATNGDTKLGGDDFDQKLIDYIAETFKAENGIDLRNDKMAIQRLKEAAEKAKIELSSATQTNINLPFITADATGPKHIDMNLTRAKFNELTHDLVQRTLEPIKKSLEGSGYAMSDIDKIIMVGGSTRIPAVQDAVKDFTGKELSKGVNPDEVVAMGAAIQAGVLTGEVKDVLLLDVTPLTLGIETFGGVSTTLIEKNTTIPTRKSQVFSTAADGQTSVEIHVVQGERSMAADNKTLGRFTLSGIAPAPRGIPQIEVTFDIDANGIVNVSAKDKGTGKEANITITASTNLTDDEIEKAVNEAKKFEAEDKKRKESIEIKNNADQIVYQTEKTLTDLGDKVSAEDKAQIEEKVKAVKDVKDGEDLEAIKKATEDLTQTFYGISSKIYQQANPEGAQGAGFDPNNMGGANAGNASAGNDKKDDNVVDADFKVEDDK</sequence>
<proteinExistence type="inferred from homology"/>
<keyword id="KW-0067">ATP-binding</keyword>
<keyword id="KW-0143">Chaperone</keyword>
<keyword id="KW-0547">Nucleotide-binding</keyword>
<keyword id="KW-0597">Phosphoprotein</keyword>
<keyword id="KW-0346">Stress response</keyword>
<organism>
    <name type="scientific">Clostridium botulinum (strain Kyoto / Type A2)</name>
    <dbReference type="NCBI Taxonomy" id="536232"/>
    <lineage>
        <taxon>Bacteria</taxon>
        <taxon>Bacillati</taxon>
        <taxon>Bacillota</taxon>
        <taxon>Clostridia</taxon>
        <taxon>Eubacteriales</taxon>
        <taxon>Clostridiaceae</taxon>
        <taxon>Clostridium</taxon>
    </lineage>
</organism>
<protein>
    <recommendedName>
        <fullName evidence="1">Chaperone protein DnaK</fullName>
    </recommendedName>
    <alternativeName>
        <fullName evidence="1">HSP70</fullName>
    </alternativeName>
    <alternativeName>
        <fullName evidence="1">Heat shock 70 kDa protein</fullName>
    </alternativeName>
    <alternativeName>
        <fullName evidence="1">Heat shock protein 70</fullName>
    </alternativeName>
</protein>
<evidence type="ECO:0000255" key="1">
    <source>
        <dbReference type="HAMAP-Rule" id="MF_00332"/>
    </source>
</evidence>
<evidence type="ECO:0000256" key="2">
    <source>
        <dbReference type="SAM" id="MobiDB-lite"/>
    </source>
</evidence>
<reference key="1">
    <citation type="submission" date="2008-10" db="EMBL/GenBank/DDBJ databases">
        <title>Genome sequence of Clostridium botulinum A2 Kyoto.</title>
        <authorList>
            <person name="Shrivastava S."/>
            <person name="Brinkac L.M."/>
            <person name="Brown J.L."/>
            <person name="Bruce D."/>
            <person name="Detter C.C."/>
            <person name="Johnson E.A."/>
            <person name="Munk C.A."/>
            <person name="Smith L.A."/>
            <person name="Smith T.J."/>
            <person name="Sutton G."/>
            <person name="Brettin T.S."/>
        </authorList>
    </citation>
    <scope>NUCLEOTIDE SEQUENCE [LARGE SCALE GENOMIC DNA]</scope>
    <source>
        <strain>Kyoto / Type A2</strain>
    </source>
</reference>
<feature type="chain" id="PRO_1000133138" description="Chaperone protein DnaK">
    <location>
        <begin position="1"/>
        <end position="623"/>
    </location>
</feature>
<feature type="region of interest" description="Disordered" evidence="2">
    <location>
        <begin position="580"/>
        <end position="623"/>
    </location>
</feature>
<feature type="compositionally biased region" description="Low complexity" evidence="2">
    <location>
        <begin position="591"/>
        <end position="604"/>
    </location>
</feature>
<feature type="compositionally biased region" description="Basic and acidic residues" evidence="2">
    <location>
        <begin position="605"/>
        <end position="623"/>
    </location>
</feature>
<feature type="modified residue" description="Phosphothreonine; by autocatalysis" evidence="1">
    <location>
        <position position="175"/>
    </location>
</feature>
<comment type="function">
    <text evidence="1">Acts as a chaperone.</text>
</comment>
<comment type="induction">
    <text evidence="1">By stress conditions e.g. heat shock.</text>
</comment>
<comment type="similarity">
    <text evidence="1">Belongs to the heat shock protein 70 family.</text>
</comment>
<accession>C1FVU0</accession>
<gene>
    <name evidence="1" type="primary">dnaK</name>
    <name type="ordered locus">CLM_3354</name>
</gene>
<dbReference type="EMBL" id="CP001581">
    <property type="protein sequence ID" value="ACO85670.1"/>
    <property type="molecule type" value="Genomic_DNA"/>
</dbReference>
<dbReference type="RefSeq" id="WP_003357980.1">
    <property type="nucleotide sequence ID" value="NC_012563.1"/>
</dbReference>
<dbReference type="SMR" id="C1FVU0"/>
<dbReference type="GeneID" id="5184256"/>
<dbReference type="KEGG" id="cby:CLM_3354"/>
<dbReference type="eggNOG" id="COG0443">
    <property type="taxonomic scope" value="Bacteria"/>
</dbReference>
<dbReference type="HOGENOM" id="CLU_005965_2_4_9"/>
<dbReference type="Proteomes" id="UP000001374">
    <property type="component" value="Chromosome"/>
</dbReference>
<dbReference type="GO" id="GO:0005524">
    <property type="term" value="F:ATP binding"/>
    <property type="evidence" value="ECO:0007669"/>
    <property type="project" value="UniProtKB-UniRule"/>
</dbReference>
<dbReference type="GO" id="GO:0140662">
    <property type="term" value="F:ATP-dependent protein folding chaperone"/>
    <property type="evidence" value="ECO:0007669"/>
    <property type="project" value="InterPro"/>
</dbReference>
<dbReference type="GO" id="GO:0051082">
    <property type="term" value="F:unfolded protein binding"/>
    <property type="evidence" value="ECO:0007669"/>
    <property type="project" value="InterPro"/>
</dbReference>
<dbReference type="CDD" id="cd10234">
    <property type="entry name" value="ASKHA_NBD_HSP70_DnaK-like"/>
    <property type="match status" value="1"/>
</dbReference>
<dbReference type="FunFam" id="2.60.34.10:FF:000014">
    <property type="entry name" value="Chaperone protein DnaK HSP70"/>
    <property type="match status" value="1"/>
</dbReference>
<dbReference type="FunFam" id="1.20.1270.10:FF:000001">
    <property type="entry name" value="Molecular chaperone DnaK"/>
    <property type="match status" value="1"/>
</dbReference>
<dbReference type="FunFam" id="3.30.420.40:FF:000071">
    <property type="entry name" value="Molecular chaperone DnaK"/>
    <property type="match status" value="1"/>
</dbReference>
<dbReference type="FunFam" id="3.90.640.10:FF:000003">
    <property type="entry name" value="Molecular chaperone DnaK"/>
    <property type="match status" value="1"/>
</dbReference>
<dbReference type="Gene3D" id="1.20.1270.10">
    <property type="match status" value="1"/>
</dbReference>
<dbReference type="Gene3D" id="3.30.420.40">
    <property type="match status" value="2"/>
</dbReference>
<dbReference type="Gene3D" id="3.90.640.10">
    <property type="entry name" value="Actin, Chain A, domain 4"/>
    <property type="match status" value="1"/>
</dbReference>
<dbReference type="Gene3D" id="2.60.34.10">
    <property type="entry name" value="Substrate Binding Domain Of DNAk, Chain A, domain 1"/>
    <property type="match status" value="1"/>
</dbReference>
<dbReference type="HAMAP" id="MF_00332">
    <property type="entry name" value="DnaK"/>
    <property type="match status" value="1"/>
</dbReference>
<dbReference type="InterPro" id="IPR043129">
    <property type="entry name" value="ATPase_NBD"/>
</dbReference>
<dbReference type="InterPro" id="IPR012725">
    <property type="entry name" value="Chaperone_DnaK"/>
</dbReference>
<dbReference type="InterPro" id="IPR018181">
    <property type="entry name" value="Heat_shock_70_CS"/>
</dbReference>
<dbReference type="InterPro" id="IPR029048">
    <property type="entry name" value="HSP70_C_sf"/>
</dbReference>
<dbReference type="InterPro" id="IPR029047">
    <property type="entry name" value="HSP70_peptide-bd_sf"/>
</dbReference>
<dbReference type="InterPro" id="IPR013126">
    <property type="entry name" value="Hsp_70_fam"/>
</dbReference>
<dbReference type="NCBIfam" id="NF001413">
    <property type="entry name" value="PRK00290.1"/>
    <property type="match status" value="1"/>
</dbReference>
<dbReference type="NCBIfam" id="TIGR02350">
    <property type="entry name" value="prok_dnaK"/>
    <property type="match status" value="1"/>
</dbReference>
<dbReference type="PANTHER" id="PTHR19375">
    <property type="entry name" value="HEAT SHOCK PROTEIN 70KDA"/>
    <property type="match status" value="1"/>
</dbReference>
<dbReference type="Pfam" id="PF00012">
    <property type="entry name" value="HSP70"/>
    <property type="match status" value="1"/>
</dbReference>
<dbReference type="PRINTS" id="PR00301">
    <property type="entry name" value="HEATSHOCK70"/>
</dbReference>
<dbReference type="SUPFAM" id="SSF53067">
    <property type="entry name" value="Actin-like ATPase domain"/>
    <property type="match status" value="2"/>
</dbReference>
<dbReference type="SUPFAM" id="SSF100934">
    <property type="entry name" value="Heat shock protein 70kD (HSP70), C-terminal subdomain"/>
    <property type="match status" value="1"/>
</dbReference>
<dbReference type="SUPFAM" id="SSF100920">
    <property type="entry name" value="Heat shock protein 70kD (HSP70), peptide-binding domain"/>
    <property type="match status" value="1"/>
</dbReference>
<dbReference type="PROSITE" id="PS00297">
    <property type="entry name" value="HSP70_1"/>
    <property type="match status" value="1"/>
</dbReference>
<dbReference type="PROSITE" id="PS00329">
    <property type="entry name" value="HSP70_2"/>
    <property type="match status" value="1"/>
</dbReference>
<dbReference type="PROSITE" id="PS01036">
    <property type="entry name" value="HSP70_3"/>
    <property type="match status" value="1"/>
</dbReference>